<name>SYS_CAMJR</name>
<evidence type="ECO:0000255" key="1">
    <source>
        <dbReference type="HAMAP-Rule" id="MF_00176"/>
    </source>
</evidence>
<comment type="function">
    <text evidence="1">Catalyzes the attachment of serine to tRNA(Ser). Is also able to aminoacylate tRNA(Sec) with serine, to form the misacylated tRNA L-seryl-tRNA(Sec), which will be further converted into selenocysteinyl-tRNA(Sec).</text>
</comment>
<comment type="catalytic activity">
    <reaction evidence="1">
        <text>tRNA(Ser) + L-serine + ATP = L-seryl-tRNA(Ser) + AMP + diphosphate + H(+)</text>
        <dbReference type="Rhea" id="RHEA:12292"/>
        <dbReference type="Rhea" id="RHEA-COMP:9669"/>
        <dbReference type="Rhea" id="RHEA-COMP:9703"/>
        <dbReference type="ChEBI" id="CHEBI:15378"/>
        <dbReference type="ChEBI" id="CHEBI:30616"/>
        <dbReference type="ChEBI" id="CHEBI:33019"/>
        <dbReference type="ChEBI" id="CHEBI:33384"/>
        <dbReference type="ChEBI" id="CHEBI:78442"/>
        <dbReference type="ChEBI" id="CHEBI:78533"/>
        <dbReference type="ChEBI" id="CHEBI:456215"/>
        <dbReference type="EC" id="6.1.1.11"/>
    </reaction>
</comment>
<comment type="catalytic activity">
    <reaction evidence="1">
        <text>tRNA(Sec) + L-serine + ATP = L-seryl-tRNA(Sec) + AMP + diphosphate + H(+)</text>
        <dbReference type="Rhea" id="RHEA:42580"/>
        <dbReference type="Rhea" id="RHEA-COMP:9742"/>
        <dbReference type="Rhea" id="RHEA-COMP:10128"/>
        <dbReference type="ChEBI" id="CHEBI:15378"/>
        <dbReference type="ChEBI" id="CHEBI:30616"/>
        <dbReference type="ChEBI" id="CHEBI:33019"/>
        <dbReference type="ChEBI" id="CHEBI:33384"/>
        <dbReference type="ChEBI" id="CHEBI:78442"/>
        <dbReference type="ChEBI" id="CHEBI:78533"/>
        <dbReference type="ChEBI" id="CHEBI:456215"/>
        <dbReference type="EC" id="6.1.1.11"/>
    </reaction>
</comment>
<comment type="pathway">
    <text evidence="1">Aminoacyl-tRNA biosynthesis; selenocysteinyl-tRNA(Sec) biosynthesis; L-seryl-tRNA(Sec) from L-serine and tRNA(Sec): step 1/1.</text>
</comment>
<comment type="subunit">
    <text evidence="1">Homodimer. The tRNA molecule binds across the dimer.</text>
</comment>
<comment type="subcellular location">
    <subcellularLocation>
        <location evidence="1">Cytoplasm</location>
    </subcellularLocation>
</comment>
<comment type="domain">
    <text evidence="1">Consists of two distinct domains, a catalytic core and a N-terminal extension that is involved in tRNA binding.</text>
</comment>
<comment type="similarity">
    <text evidence="1">Belongs to the class-II aminoacyl-tRNA synthetase family. Type-1 seryl-tRNA synthetase subfamily.</text>
</comment>
<proteinExistence type="inferred from homology"/>
<keyword id="KW-0030">Aminoacyl-tRNA synthetase</keyword>
<keyword id="KW-0067">ATP-binding</keyword>
<keyword id="KW-0963">Cytoplasm</keyword>
<keyword id="KW-0436">Ligase</keyword>
<keyword id="KW-0547">Nucleotide-binding</keyword>
<keyword id="KW-0648">Protein biosynthesis</keyword>
<feature type="chain" id="PRO_0000122025" description="Serine--tRNA ligase">
    <location>
        <begin position="1"/>
        <end position="411"/>
    </location>
</feature>
<feature type="binding site" evidence="1">
    <location>
        <begin position="226"/>
        <end position="228"/>
    </location>
    <ligand>
        <name>L-serine</name>
        <dbReference type="ChEBI" id="CHEBI:33384"/>
    </ligand>
</feature>
<feature type="binding site" evidence="1">
    <location>
        <begin position="257"/>
        <end position="259"/>
    </location>
    <ligand>
        <name>ATP</name>
        <dbReference type="ChEBI" id="CHEBI:30616"/>
    </ligand>
</feature>
<feature type="binding site" evidence="1">
    <location>
        <position position="280"/>
    </location>
    <ligand>
        <name>L-serine</name>
        <dbReference type="ChEBI" id="CHEBI:33384"/>
    </ligand>
</feature>
<feature type="binding site" evidence="1">
    <location>
        <begin position="344"/>
        <end position="347"/>
    </location>
    <ligand>
        <name>ATP</name>
        <dbReference type="ChEBI" id="CHEBI:30616"/>
    </ligand>
</feature>
<feature type="binding site" evidence="1">
    <location>
        <position position="379"/>
    </location>
    <ligand>
        <name>L-serine</name>
        <dbReference type="ChEBI" id="CHEBI:33384"/>
    </ligand>
</feature>
<sequence length="411" mass="46569">MLDLKNLQNNFDEVAKKLKNKKVDENILKKLAELFASLKKEKIALEEFQAFQNKFSKELATAEDKESLKAKLSENKSKINEQSAKVNALENELEEIAHAIPNIPDECVPVGEDENENVELKKVLNPPSFDFTPKEHFELGESLNWLDFIRGVKISQSRFCVLKNEGALLSRALVNYMIDFNRSRGFEFVNVPFLVNGATMFGTGQLPKFKEDMYKVDDEDLYLISTSEIPVTNLYSGEILASETLPIKMTCYSACFRKEAGSAGRDTRGIIRQHQFEKVELVSITKTEQSDSVFNEMLECASDLLSSLGLAHRHLMLCTGDLGFSAAKTVDLEVWLPGQNKYREISSVSNCRDFQARRAKIRYKNEQGKNELVHTLNGSSLAVGRTLVAIMENYQDKEGKIHIPDVLKKYF</sequence>
<organism>
    <name type="scientific">Campylobacter jejuni (strain RM1221)</name>
    <dbReference type="NCBI Taxonomy" id="195099"/>
    <lineage>
        <taxon>Bacteria</taxon>
        <taxon>Pseudomonadati</taxon>
        <taxon>Campylobacterota</taxon>
        <taxon>Epsilonproteobacteria</taxon>
        <taxon>Campylobacterales</taxon>
        <taxon>Campylobacteraceae</taxon>
        <taxon>Campylobacter</taxon>
    </lineage>
</organism>
<reference key="1">
    <citation type="journal article" date="2005" name="PLoS Biol.">
        <title>Major structural differences and novel potential virulence mechanisms from the genomes of multiple Campylobacter species.</title>
        <authorList>
            <person name="Fouts D.E."/>
            <person name="Mongodin E.F."/>
            <person name="Mandrell R.E."/>
            <person name="Miller W.G."/>
            <person name="Rasko D.A."/>
            <person name="Ravel J."/>
            <person name="Brinkac L.M."/>
            <person name="DeBoy R.T."/>
            <person name="Parker C.T."/>
            <person name="Daugherty S.C."/>
            <person name="Dodson R.J."/>
            <person name="Durkin A.S."/>
            <person name="Madupu R."/>
            <person name="Sullivan S.A."/>
            <person name="Shetty J.U."/>
            <person name="Ayodeji M.A."/>
            <person name="Shvartsbeyn A."/>
            <person name="Schatz M.C."/>
            <person name="Badger J.H."/>
            <person name="Fraser C.M."/>
            <person name="Nelson K.E."/>
        </authorList>
    </citation>
    <scope>NUCLEOTIDE SEQUENCE [LARGE SCALE GENOMIC DNA]</scope>
    <source>
        <strain>RM1221</strain>
    </source>
</reference>
<accession>Q5HW78</accession>
<dbReference type="EC" id="6.1.1.11" evidence="1"/>
<dbReference type="EMBL" id="CP000025">
    <property type="protein sequence ID" value="AAW35027.1"/>
    <property type="molecule type" value="Genomic_DNA"/>
</dbReference>
<dbReference type="RefSeq" id="WP_011049671.1">
    <property type="nucleotide sequence ID" value="NC_003912.7"/>
</dbReference>
<dbReference type="SMR" id="Q5HW78"/>
<dbReference type="KEGG" id="cjr:CJE0438"/>
<dbReference type="HOGENOM" id="CLU_023797_1_1_7"/>
<dbReference type="UniPathway" id="UPA00906">
    <property type="reaction ID" value="UER00895"/>
</dbReference>
<dbReference type="GO" id="GO:0005737">
    <property type="term" value="C:cytoplasm"/>
    <property type="evidence" value="ECO:0007669"/>
    <property type="project" value="UniProtKB-SubCell"/>
</dbReference>
<dbReference type="GO" id="GO:0005524">
    <property type="term" value="F:ATP binding"/>
    <property type="evidence" value="ECO:0007669"/>
    <property type="project" value="UniProtKB-UniRule"/>
</dbReference>
<dbReference type="GO" id="GO:0004828">
    <property type="term" value="F:serine-tRNA ligase activity"/>
    <property type="evidence" value="ECO:0007669"/>
    <property type="project" value="UniProtKB-UniRule"/>
</dbReference>
<dbReference type="GO" id="GO:0016260">
    <property type="term" value="P:selenocysteine biosynthetic process"/>
    <property type="evidence" value="ECO:0007669"/>
    <property type="project" value="UniProtKB-UniRule"/>
</dbReference>
<dbReference type="GO" id="GO:0006434">
    <property type="term" value="P:seryl-tRNA aminoacylation"/>
    <property type="evidence" value="ECO:0007669"/>
    <property type="project" value="UniProtKB-UniRule"/>
</dbReference>
<dbReference type="CDD" id="cd00770">
    <property type="entry name" value="SerRS_core"/>
    <property type="match status" value="1"/>
</dbReference>
<dbReference type="Gene3D" id="3.30.930.10">
    <property type="entry name" value="Bira Bifunctional Protein, Domain 2"/>
    <property type="match status" value="1"/>
</dbReference>
<dbReference type="Gene3D" id="1.10.287.40">
    <property type="entry name" value="Serine-tRNA synthetase, tRNA binding domain"/>
    <property type="match status" value="1"/>
</dbReference>
<dbReference type="HAMAP" id="MF_00176">
    <property type="entry name" value="Ser_tRNA_synth_type1"/>
    <property type="match status" value="1"/>
</dbReference>
<dbReference type="InterPro" id="IPR002314">
    <property type="entry name" value="aa-tRNA-synt_IIb"/>
</dbReference>
<dbReference type="InterPro" id="IPR006195">
    <property type="entry name" value="aa-tRNA-synth_II"/>
</dbReference>
<dbReference type="InterPro" id="IPR045864">
    <property type="entry name" value="aa-tRNA-synth_II/BPL/LPL"/>
</dbReference>
<dbReference type="InterPro" id="IPR002317">
    <property type="entry name" value="Ser-tRNA-ligase_type_1"/>
</dbReference>
<dbReference type="InterPro" id="IPR015866">
    <property type="entry name" value="Ser-tRNA-synth_1_N"/>
</dbReference>
<dbReference type="InterPro" id="IPR042103">
    <property type="entry name" value="SerRS_1_N_sf"/>
</dbReference>
<dbReference type="InterPro" id="IPR033729">
    <property type="entry name" value="SerRS_core"/>
</dbReference>
<dbReference type="InterPro" id="IPR010978">
    <property type="entry name" value="tRNA-bd_arm"/>
</dbReference>
<dbReference type="NCBIfam" id="TIGR00414">
    <property type="entry name" value="serS"/>
    <property type="match status" value="1"/>
</dbReference>
<dbReference type="PANTHER" id="PTHR43697:SF1">
    <property type="entry name" value="SERINE--TRNA LIGASE"/>
    <property type="match status" value="1"/>
</dbReference>
<dbReference type="PANTHER" id="PTHR43697">
    <property type="entry name" value="SERYL-TRNA SYNTHETASE"/>
    <property type="match status" value="1"/>
</dbReference>
<dbReference type="Pfam" id="PF02403">
    <property type="entry name" value="Seryl_tRNA_N"/>
    <property type="match status" value="1"/>
</dbReference>
<dbReference type="Pfam" id="PF00587">
    <property type="entry name" value="tRNA-synt_2b"/>
    <property type="match status" value="1"/>
</dbReference>
<dbReference type="PIRSF" id="PIRSF001529">
    <property type="entry name" value="Ser-tRNA-synth_IIa"/>
    <property type="match status" value="1"/>
</dbReference>
<dbReference type="PRINTS" id="PR00981">
    <property type="entry name" value="TRNASYNTHSER"/>
</dbReference>
<dbReference type="SUPFAM" id="SSF55681">
    <property type="entry name" value="Class II aaRS and biotin synthetases"/>
    <property type="match status" value="1"/>
</dbReference>
<dbReference type="SUPFAM" id="SSF46589">
    <property type="entry name" value="tRNA-binding arm"/>
    <property type="match status" value="1"/>
</dbReference>
<dbReference type="PROSITE" id="PS50862">
    <property type="entry name" value="AA_TRNA_LIGASE_II"/>
    <property type="match status" value="1"/>
</dbReference>
<gene>
    <name evidence="1" type="primary">serS</name>
    <name type="ordered locus">CJE0438</name>
</gene>
<protein>
    <recommendedName>
        <fullName evidence="1">Serine--tRNA ligase</fullName>
        <ecNumber evidence="1">6.1.1.11</ecNumber>
    </recommendedName>
    <alternativeName>
        <fullName evidence="1">Seryl-tRNA synthetase</fullName>
        <shortName evidence="1">SerRS</shortName>
    </alternativeName>
    <alternativeName>
        <fullName evidence="1">Seryl-tRNA(Ser/Sec) synthetase</fullName>
    </alternativeName>
</protein>